<keyword id="KW-0028">Amino-acid biosynthesis</keyword>
<keyword id="KW-0479">Metal-binding</keyword>
<keyword id="KW-0486">Methionine biosynthesis</keyword>
<keyword id="KW-0489">Methyltransferase</keyword>
<keyword id="KW-0677">Repeat</keyword>
<keyword id="KW-0808">Transferase</keyword>
<keyword id="KW-0862">Zinc</keyword>
<evidence type="ECO:0000255" key="1">
    <source>
        <dbReference type="HAMAP-Rule" id="MF_00172"/>
    </source>
</evidence>
<proteinExistence type="inferred from homology"/>
<accession>Q87NA1</accession>
<protein>
    <recommendedName>
        <fullName evidence="1">5-methyltetrahydropteroyltriglutamate--homocysteine methyltransferase</fullName>
        <ecNumber evidence="1">2.1.1.14</ecNumber>
    </recommendedName>
    <alternativeName>
        <fullName evidence="1">Cobalamin-independent methionine synthase</fullName>
    </alternativeName>
    <alternativeName>
        <fullName evidence="1">Methionine synthase, vitamin-B12 independent isozyme</fullName>
    </alternativeName>
</protein>
<name>METE_VIBPA</name>
<reference key="1">
    <citation type="journal article" date="2003" name="Lancet">
        <title>Genome sequence of Vibrio parahaemolyticus: a pathogenic mechanism distinct from that of V. cholerae.</title>
        <authorList>
            <person name="Makino K."/>
            <person name="Oshima K."/>
            <person name="Kurokawa K."/>
            <person name="Yokoyama K."/>
            <person name="Uda T."/>
            <person name="Tagomori K."/>
            <person name="Iijima Y."/>
            <person name="Najima M."/>
            <person name="Nakano M."/>
            <person name="Yamashita A."/>
            <person name="Kubota Y."/>
            <person name="Kimura S."/>
            <person name="Yasunaga T."/>
            <person name="Honda T."/>
            <person name="Shinagawa H."/>
            <person name="Hattori M."/>
            <person name="Iida T."/>
        </authorList>
    </citation>
    <scope>NUCLEOTIDE SEQUENCE [LARGE SCALE GENOMIC DNA]</scope>
    <source>
        <strain>RIMD 2210633</strain>
    </source>
</reference>
<gene>
    <name evidence="1" type="primary">metE</name>
    <name type="ordered locus">VP1974</name>
</gene>
<sequence>MATTTHILGYPRIGEKRELKFAQEKYWRGDIDQTELKKVGADLRAKNWQTQTEAGLSFTTAGDFAWYDHVLTTTLLLGHVPKRHAGGFPNLDTLFKVGRGQSQAGCGCAGAAASDMTKWFNTNYHYIVPEFSKDDTFEVSWPQLFEEINEAVQAGHKVKPVLLGPVSYLYLGKEVEEGFDRLTLLPRLLTAYQAILAKLASQGVEWVQIDEPILSLELEKQWADAFKLAYQLIRSDVKVLLTTYFDSVTDTLDKIVELPVDGLHVDLSAAPQQLDDVVAKLPEGWVLSAGVVNGRNVWRSDLSAQLERLQPVKEKLGDKLWVASSCSLLHSPVDLELETELSEEVKSWFAFAKQKVTEVALLGRALDGDQNAILACDTYSQPIKARKTATHVNKPQVQVRLNNITASLAERSAPYAERAAHQAEVLGLPLLPTTTIGSFPQTGEIRVQRSAYRTGQLSESDYIQALKGHIADAVKRQEALDLDVLVHGEAERNDMVEYFAENLAGFQTTKFGWVQSYGSRCVKPAIVVADIEREKPITVEWSTYAQSLTSKQMKGMLTGPVTILCWTFPREDITRQEIAQQLALALRDEVSDLQDAGINIIQIDEPAIREGLPLKKRDHKAYLEWAVNAFKISAASAKPETQIHTHMCYSEFNEIIDSVAALDADVITIETSRSNMELLKAFEEFNYPNEIGPGVYDIHSPNIPTEEWIEGLIKKAAEKIPVQRLWVNPDCGLKTRNWAETEAALANLVSAAKKLRAELA</sequence>
<comment type="function">
    <text evidence="1">Catalyzes the transfer of a methyl group from 5-methyltetrahydrofolate to homocysteine resulting in methionine formation.</text>
</comment>
<comment type="catalytic activity">
    <reaction evidence="1">
        <text>5-methyltetrahydropteroyltri-L-glutamate + L-homocysteine = tetrahydropteroyltri-L-glutamate + L-methionine</text>
        <dbReference type="Rhea" id="RHEA:21196"/>
        <dbReference type="ChEBI" id="CHEBI:57844"/>
        <dbReference type="ChEBI" id="CHEBI:58140"/>
        <dbReference type="ChEBI" id="CHEBI:58199"/>
        <dbReference type="ChEBI" id="CHEBI:58207"/>
        <dbReference type="EC" id="2.1.1.14"/>
    </reaction>
</comment>
<comment type="cofactor">
    <cofactor evidence="1">
        <name>Zn(2+)</name>
        <dbReference type="ChEBI" id="CHEBI:29105"/>
    </cofactor>
    <text evidence="1">Binds 1 zinc ion per subunit.</text>
</comment>
<comment type="pathway">
    <text evidence="1">Amino-acid biosynthesis; L-methionine biosynthesis via de novo pathway; L-methionine from L-homocysteine (MetE route): step 1/1.</text>
</comment>
<comment type="similarity">
    <text evidence="1">Belongs to the vitamin-B12 independent methionine synthase family.</text>
</comment>
<feature type="chain" id="PRO_0000098677" description="5-methyltetrahydropteroyltriglutamate--homocysteine methyltransferase">
    <location>
        <begin position="1"/>
        <end position="760"/>
    </location>
</feature>
<feature type="active site" description="Proton donor" evidence="1">
    <location>
        <position position="699"/>
    </location>
</feature>
<feature type="binding site" evidence="1">
    <location>
        <begin position="17"/>
        <end position="20"/>
    </location>
    <ligand>
        <name>5-methyltetrahydropteroyltri-L-glutamate</name>
        <dbReference type="ChEBI" id="CHEBI:58207"/>
    </ligand>
</feature>
<feature type="binding site" evidence="1">
    <location>
        <position position="118"/>
    </location>
    <ligand>
        <name>5-methyltetrahydropteroyltri-L-glutamate</name>
        <dbReference type="ChEBI" id="CHEBI:58207"/>
    </ligand>
</feature>
<feature type="binding site" evidence="1">
    <location>
        <begin position="436"/>
        <end position="438"/>
    </location>
    <ligand>
        <name>L-homocysteine</name>
        <dbReference type="ChEBI" id="CHEBI:58199"/>
    </ligand>
</feature>
<feature type="binding site" evidence="1">
    <location>
        <begin position="436"/>
        <end position="438"/>
    </location>
    <ligand>
        <name>L-methionine</name>
        <dbReference type="ChEBI" id="CHEBI:57844"/>
    </ligand>
</feature>
<feature type="binding site" evidence="1">
    <location>
        <position position="489"/>
    </location>
    <ligand>
        <name>L-homocysteine</name>
        <dbReference type="ChEBI" id="CHEBI:58199"/>
    </ligand>
</feature>
<feature type="binding site" evidence="1">
    <location>
        <position position="489"/>
    </location>
    <ligand>
        <name>L-methionine</name>
        <dbReference type="ChEBI" id="CHEBI:57844"/>
    </ligand>
</feature>
<feature type="binding site" evidence="1">
    <location>
        <begin position="520"/>
        <end position="521"/>
    </location>
    <ligand>
        <name>5-methyltetrahydropteroyltri-L-glutamate</name>
        <dbReference type="ChEBI" id="CHEBI:58207"/>
    </ligand>
</feature>
<feature type="binding site" evidence="1">
    <location>
        <position position="566"/>
    </location>
    <ligand>
        <name>5-methyltetrahydropteroyltri-L-glutamate</name>
        <dbReference type="ChEBI" id="CHEBI:58207"/>
    </ligand>
</feature>
<feature type="binding site" evidence="1">
    <location>
        <position position="604"/>
    </location>
    <ligand>
        <name>L-homocysteine</name>
        <dbReference type="ChEBI" id="CHEBI:58199"/>
    </ligand>
</feature>
<feature type="binding site" evidence="1">
    <location>
        <position position="604"/>
    </location>
    <ligand>
        <name>L-methionine</name>
        <dbReference type="ChEBI" id="CHEBI:57844"/>
    </ligand>
</feature>
<feature type="binding site" evidence="1">
    <location>
        <position position="610"/>
    </location>
    <ligand>
        <name>5-methyltetrahydropteroyltri-L-glutamate</name>
        <dbReference type="ChEBI" id="CHEBI:58207"/>
    </ligand>
</feature>
<feature type="binding site" evidence="1">
    <location>
        <position position="646"/>
    </location>
    <ligand>
        <name>Zn(2+)</name>
        <dbReference type="ChEBI" id="CHEBI:29105"/>
        <note>catalytic</note>
    </ligand>
</feature>
<feature type="binding site" evidence="1">
    <location>
        <position position="648"/>
    </location>
    <ligand>
        <name>Zn(2+)</name>
        <dbReference type="ChEBI" id="CHEBI:29105"/>
        <note>catalytic</note>
    </ligand>
</feature>
<feature type="binding site" evidence="1">
    <location>
        <position position="670"/>
    </location>
    <ligand>
        <name>Zn(2+)</name>
        <dbReference type="ChEBI" id="CHEBI:29105"/>
        <note>catalytic</note>
    </ligand>
</feature>
<feature type="binding site" evidence="1">
    <location>
        <position position="731"/>
    </location>
    <ligand>
        <name>Zn(2+)</name>
        <dbReference type="ChEBI" id="CHEBI:29105"/>
        <note>catalytic</note>
    </ligand>
</feature>
<organism>
    <name type="scientific">Vibrio parahaemolyticus serotype O3:K6 (strain RIMD 2210633)</name>
    <dbReference type="NCBI Taxonomy" id="223926"/>
    <lineage>
        <taxon>Bacteria</taxon>
        <taxon>Pseudomonadati</taxon>
        <taxon>Pseudomonadota</taxon>
        <taxon>Gammaproteobacteria</taxon>
        <taxon>Vibrionales</taxon>
        <taxon>Vibrionaceae</taxon>
        <taxon>Vibrio</taxon>
    </lineage>
</organism>
<dbReference type="EC" id="2.1.1.14" evidence="1"/>
<dbReference type="EMBL" id="BA000031">
    <property type="protein sequence ID" value="BAC60237.1"/>
    <property type="molecule type" value="Genomic_DNA"/>
</dbReference>
<dbReference type="RefSeq" id="NP_798353.1">
    <property type="nucleotide sequence ID" value="NC_004603.1"/>
</dbReference>
<dbReference type="RefSeq" id="WP_005481651.1">
    <property type="nucleotide sequence ID" value="NC_004603.1"/>
</dbReference>
<dbReference type="SMR" id="Q87NA1"/>
<dbReference type="GeneID" id="1189485"/>
<dbReference type="KEGG" id="vpa:VP1974"/>
<dbReference type="PATRIC" id="fig|223926.6.peg.1887"/>
<dbReference type="eggNOG" id="COG0620">
    <property type="taxonomic scope" value="Bacteria"/>
</dbReference>
<dbReference type="HOGENOM" id="CLU_013175_0_0_6"/>
<dbReference type="UniPathway" id="UPA00051">
    <property type="reaction ID" value="UER00082"/>
</dbReference>
<dbReference type="Proteomes" id="UP000002493">
    <property type="component" value="Chromosome 1"/>
</dbReference>
<dbReference type="GO" id="GO:0003871">
    <property type="term" value="F:5-methyltetrahydropteroyltriglutamate-homocysteine S-methyltransferase activity"/>
    <property type="evidence" value="ECO:0007669"/>
    <property type="project" value="UniProtKB-UniRule"/>
</dbReference>
<dbReference type="GO" id="GO:0008270">
    <property type="term" value="F:zinc ion binding"/>
    <property type="evidence" value="ECO:0007669"/>
    <property type="project" value="InterPro"/>
</dbReference>
<dbReference type="GO" id="GO:0009086">
    <property type="term" value="P:methionine biosynthetic process"/>
    <property type="evidence" value="ECO:0007669"/>
    <property type="project" value="UniProtKB-UniRule"/>
</dbReference>
<dbReference type="GO" id="GO:0032259">
    <property type="term" value="P:methylation"/>
    <property type="evidence" value="ECO:0007669"/>
    <property type="project" value="UniProtKB-KW"/>
</dbReference>
<dbReference type="CDD" id="cd03311">
    <property type="entry name" value="CIMS_C_terminal_like"/>
    <property type="match status" value="1"/>
</dbReference>
<dbReference type="CDD" id="cd03312">
    <property type="entry name" value="CIMS_N_terminal_like"/>
    <property type="match status" value="1"/>
</dbReference>
<dbReference type="FunFam" id="3.20.20.210:FF:000002">
    <property type="entry name" value="5-methyltetrahydropteroyltriglutamate--homocysteine methyltransferase"/>
    <property type="match status" value="1"/>
</dbReference>
<dbReference type="FunFam" id="3.20.20.210:FF:000003">
    <property type="entry name" value="5-methyltetrahydropteroyltriglutamate--homocysteine methyltransferase"/>
    <property type="match status" value="1"/>
</dbReference>
<dbReference type="Gene3D" id="3.20.20.210">
    <property type="match status" value="2"/>
</dbReference>
<dbReference type="HAMAP" id="MF_00172">
    <property type="entry name" value="Meth_synth"/>
    <property type="match status" value="1"/>
</dbReference>
<dbReference type="InterPro" id="IPR013215">
    <property type="entry name" value="Cbl-indep_Met_Synth_N"/>
</dbReference>
<dbReference type="InterPro" id="IPR006276">
    <property type="entry name" value="Cobalamin-indep_Met_synthase"/>
</dbReference>
<dbReference type="InterPro" id="IPR002629">
    <property type="entry name" value="Met_Synth_C/arc"/>
</dbReference>
<dbReference type="InterPro" id="IPR038071">
    <property type="entry name" value="UROD/MetE-like_sf"/>
</dbReference>
<dbReference type="NCBIfam" id="TIGR01371">
    <property type="entry name" value="met_syn_B12ind"/>
    <property type="match status" value="1"/>
</dbReference>
<dbReference type="NCBIfam" id="NF003556">
    <property type="entry name" value="PRK05222.1"/>
    <property type="match status" value="1"/>
</dbReference>
<dbReference type="PANTHER" id="PTHR30519">
    <property type="entry name" value="5-METHYLTETRAHYDROPTEROYLTRIGLUTAMATE--HOMOCYSTEINE METHYLTRANSFERASE"/>
    <property type="match status" value="1"/>
</dbReference>
<dbReference type="Pfam" id="PF08267">
    <property type="entry name" value="Meth_synt_1"/>
    <property type="match status" value="1"/>
</dbReference>
<dbReference type="Pfam" id="PF01717">
    <property type="entry name" value="Meth_synt_2"/>
    <property type="match status" value="1"/>
</dbReference>
<dbReference type="PIRSF" id="PIRSF000382">
    <property type="entry name" value="MeTrfase_B12_ind"/>
    <property type="match status" value="1"/>
</dbReference>
<dbReference type="SUPFAM" id="SSF51726">
    <property type="entry name" value="UROD/MetE-like"/>
    <property type="match status" value="2"/>
</dbReference>